<sequence>MLKNIPIPSPLSPVEGILIKRKTLERYFSIERLEQQAHQRAKRILREAEEEAKTLRMYAYQEGYEQGMIDALQQVAAYLTDNQTMAWKWMEKIQIYARELFSAAVDHPETLLTVLDEWLRDFDKPEGQLFLTLPVNAKKDHQKLMVLLMENWPGTFNLKYHQEQRFIMSCGDQIAEFSPEQFVETAVGVIKHHLDELPQDCRTISDNAINALIDEWKTKTQAEVIR</sequence>
<comment type="function">
    <text evidence="1 2 3">Component of the type III secretion system (T3SS), also called injectisome, which is used to inject bacterial effector proteins into eukaryotic host cells (By similarity). Acts as a regulator of the InvC/SctN1 ATPase activity (By similarity). Required for invasion and secretion (PubMed:10816487).</text>
</comment>
<comment type="subunit">
    <text evidence="1">The core secretion machinery of the T3SS is composed of approximately 20 different proteins, including cytoplasmic components, a base, an export apparatus and a needle (By similarity). This subunit is part of the cytosolic complex (By similarity). Interacts directly with InvC/SctN1 (T3SS-1 ATPase) and SpaO/SctQ (the major sorting platform component) (By similarity).</text>
</comment>
<comment type="subcellular location">
    <subcellularLocation>
        <location evidence="1">Cytoplasm</location>
    </subcellularLocation>
</comment>
<comment type="induction">
    <text evidence="4">Expression is regulated in an oxygen-dependent manner.</text>
</comment>
<comment type="caution">
    <text evidence="7 8">Was originally thought to be a longer protein that encodes what is now known to be OrgA and OrgB.</text>
</comment>
<comment type="sequence caution" evidence="6">
    <conflict type="erroneous initiation">
        <sequence resource="EMBL-CDS" id="AAA72055"/>
    </conflict>
    <text>Extended N-terminus.</text>
</comment>
<proteinExistence type="evidence at transcript level"/>
<keyword id="KW-0963">Cytoplasm</keyword>
<keyword id="KW-0653">Protein transport</keyword>
<keyword id="KW-0813">Transport</keyword>
<keyword id="KW-0843">Virulence</keyword>
<feature type="chain" id="PRO_0000406080" description="SPI-1 type 3 secretion system stator protein">
    <location>
        <begin position="1"/>
        <end position="226"/>
    </location>
</feature>
<dbReference type="EMBL" id="L33855">
    <property type="protein sequence ID" value="AAA72055.1"/>
    <property type="status" value="ALT_INIT"/>
    <property type="molecule type" value="Genomic_DNA"/>
</dbReference>
<dbReference type="EMBL" id="FQ312003">
    <property type="protein sequence ID" value="CBW18947.1"/>
    <property type="molecule type" value="Genomic_DNA"/>
</dbReference>
<dbReference type="RefSeq" id="WP_000916654.1">
    <property type="nucleotide sequence ID" value="NZ_QASL01000017.1"/>
</dbReference>
<dbReference type="SMR" id="E1WAB4"/>
<dbReference type="KEGG" id="sey:SL1344_2849"/>
<dbReference type="PATRIC" id="fig|216597.6.peg.3170"/>
<dbReference type="HOGENOM" id="CLU_106719_0_0_6"/>
<dbReference type="BioCyc" id="SENT216597:SL1344_RS14855-MONOMER"/>
<dbReference type="Proteomes" id="UP000008962">
    <property type="component" value="Chromosome"/>
</dbReference>
<dbReference type="GO" id="GO:0005737">
    <property type="term" value="C:cytoplasm"/>
    <property type="evidence" value="ECO:0007669"/>
    <property type="project" value="UniProtKB-SubCell"/>
</dbReference>
<dbReference type="GO" id="GO:0015031">
    <property type="term" value="P:protein transport"/>
    <property type="evidence" value="ECO:0007669"/>
    <property type="project" value="UniProtKB-KW"/>
</dbReference>
<dbReference type="NCBIfam" id="NF011850">
    <property type="entry name" value="PRK15322.1"/>
    <property type="match status" value="1"/>
</dbReference>
<evidence type="ECO:0000250" key="1">
    <source>
        <dbReference type="UniProtKB" id="P0CL45"/>
    </source>
</evidence>
<evidence type="ECO:0000250" key="2">
    <source>
        <dbReference type="UniProtKB" id="Q99PY0"/>
    </source>
</evidence>
<evidence type="ECO:0000269" key="3">
    <source>
    </source>
</evidence>
<evidence type="ECO:0000269" key="4">
    <source>
    </source>
</evidence>
<evidence type="ECO:0000303" key="5">
    <source>
    </source>
</evidence>
<evidence type="ECO:0000305" key="6"/>
<evidence type="ECO:0000305" key="7">
    <source>
    </source>
</evidence>
<evidence type="ECO:0000305" key="8">
    <source>
    </source>
</evidence>
<protein>
    <recommendedName>
        <fullName evidence="6">SPI-1 type 3 secretion system stator protein</fullName>
        <shortName evidence="6">T3SS-1 stator protein</shortName>
    </recommendedName>
    <alternativeName>
        <fullName>Oxygen-regulated invasion protein OrgB</fullName>
    </alternativeName>
</protein>
<gene>
    <name evidence="1" type="primary">sctL1</name>
    <name evidence="5" type="synonym">orgB</name>
    <name type="ordered locus">SL1344_2849</name>
</gene>
<reference key="1">
    <citation type="journal article" date="1994" name="Infect. Immun.">
        <title>Identification and characterization of a Salmonella typhimurium oxygen-regulated gene required for bacterial internalization.</title>
        <authorList>
            <person name="Jones B.D."/>
            <person name="Falkow S."/>
        </authorList>
    </citation>
    <scope>NUCLEOTIDE SEQUENCE [GENOMIC DNA]</scope>
    <scope>INDUCTION</scope>
    <source>
        <strain>SL1344</strain>
    </source>
</reference>
<reference key="2">
    <citation type="journal article" date="2000" name="Infect. Immun.">
        <title>Transcriptional organization and function of invasion genes within Salmonella enterica serovar Typhimurium pathogenicity island 1, including the prgH, prgI, prgJ, prgK, orgA, orgB, and orgC genes.</title>
        <authorList>
            <person name="Klein J.R."/>
            <person name="Fahlen T.F."/>
            <person name="Jones B.D."/>
        </authorList>
    </citation>
    <scope>SEQUENCE REVISION</scope>
    <scope>FUNCTION</scope>
    <source>
        <strain>SL1344</strain>
    </source>
</reference>
<reference key="3">
    <citation type="journal article" date="2012" name="Proc. Natl. Acad. Sci. U.S.A.">
        <title>The transcriptional landscape and small RNAs of Salmonella enterica serovar Typhimurium.</title>
        <authorList>
            <person name="Kroger C."/>
            <person name="Dillon S.C."/>
            <person name="Cameron A.D."/>
            <person name="Papenfort K."/>
            <person name="Sivasankaran S.K."/>
            <person name="Hokamp K."/>
            <person name="Chao Y."/>
            <person name="Sittka A."/>
            <person name="Hebrard M."/>
            <person name="Handler K."/>
            <person name="Colgan A."/>
            <person name="Leekitcharoenphon P."/>
            <person name="Langridge G.C."/>
            <person name="Lohan A.J."/>
            <person name="Loftus B."/>
            <person name="Lucchini S."/>
            <person name="Ussery D.W."/>
            <person name="Dorman C.J."/>
            <person name="Thomson N.R."/>
            <person name="Vogel J."/>
            <person name="Hinton J.C."/>
        </authorList>
    </citation>
    <scope>NUCLEOTIDE SEQUENCE [LARGE SCALE GENOMIC DNA]</scope>
    <source>
        <strain>SL1344</strain>
    </source>
</reference>
<name>SCTL1_SALTS</name>
<organism>
    <name type="scientific">Salmonella typhimurium (strain SL1344)</name>
    <dbReference type="NCBI Taxonomy" id="216597"/>
    <lineage>
        <taxon>Bacteria</taxon>
        <taxon>Pseudomonadati</taxon>
        <taxon>Pseudomonadota</taxon>
        <taxon>Gammaproteobacteria</taxon>
        <taxon>Enterobacterales</taxon>
        <taxon>Enterobacteriaceae</taxon>
        <taxon>Salmonella</taxon>
    </lineage>
</organism>
<accession>E1WAB4</accession>
<accession>P40823</accession>
<accession>P58654</accession>